<accession>O94299</accession>
<protein>
    <recommendedName>
        <fullName>Uncharacterized protein C887.16</fullName>
    </recommendedName>
</protein>
<name>YOOG_SCHPO</name>
<proteinExistence type="predicted"/>
<feature type="chain" id="PRO_0000116876" description="Uncharacterized protein C887.16">
    <location>
        <begin position="1"/>
        <end position="109"/>
    </location>
</feature>
<feature type="transmembrane region" description="Helical" evidence="1">
    <location>
        <begin position="75"/>
        <end position="95"/>
    </location>
</feature>
<reference key="1">
    <citation type="journal article" date="2002" name="Nature">
        <title>The genome sequence of Schizosaccharomyces pombe.</title>
        <authorList>
            <person name="Wood V."/>
            <person name="Gwilliam R."/>
            <person name="Rajandream M.A."/>
            <person name="Lyne M.H."/>
            <person name="Lyne R."/>
            <person name="Stewart A."/>
            <person name="Sgouros J.G."/>
            <person name="Peat N."/>
            <person name="Hayles J."/>
            <person name="Baker S.G."/>
            <person name="Basham D."/>
            <person name="Bowman S."/>
            <person name="Brooks K."/>
            <person name="Brown D."/>
            <person name="Brown S."/>
            <person name="Chillingworth T."/>
            <person name="Churcher C.M."/>
            <person name="Collins M."/>
            <person name="Connor R."/>
            <person name="Cronin A."/>
            <person name="Davis P."/>
            <person name="Feltwell T."/>
            <person name="Fraser A."/>
            <person name="Gentles S."/>
            <person name="Goble A."/>
            <person name="Hamlin N."/>
            <person name="Harris D.E."/>
            <person name="Hidalgo J."/>
            <person name="Hodgson G."/>
            <person name="Holroyd S."/>
            <person name="Hornsby T."/>
            <person name="Howarth S."/>
            <person name="Huckle E.J."/>
            <person name="Hunt S."/>
            <person name="Jagels K."/>
            <person name="James K.D."/>
            <person name="Jones L."/>
            <person name="Jones M."/>
            <person name="Leather S."/>
            <person name="McDonald S."/>
            <person name="McLean J."/>
            <person name="Mooney P."/>
            <person name="Moule S."/>
            <person name="Mungall K.L."/>
            <person name="Murphy L.D."/>
            <person name="Niblett D."/>
            <person name="Odell C."/>
            <person name="Oliver K."/>
            <person name="O'Neil S."/>
            <person name="Pearson D."/>
            <person name="Quail M.A."/>
            <person name="Rabbinowitsch E."/>
            <person name="Rutherford K.M."/>
            <person name="Rutter S."/>
            <person name="Saunders D."/>
            <person name="Seeger K."/>
            <person name="Sharp S."/>
            <person name="Skelton J."/>
            <person name="Simmonds M.N."/>
            <person name="Squares R."/>
            <person name="Squares S."/>
            <person name="Stevens K."/>
            <person name="Taylor K."/>
            <person name="Taylor R.G."/>
            <person name="Tivey A."/>
            <person name="Walsh S.V."/>
            <person name="Warren T."/>
            <person name="Whitehead S."/>
            <person name="Woodward J.R."/>
            <person name="Volckaert G."/>
            <person name="Aert R."/>
            <person name="Robben J."/>
            <person name="Grymonprez B."/>
            <person name="Weltjens I."/>
            <person name="Vanstreels E."/>
            <person name="Rieger M."/>
            <person name="Schaefer M."/>
            <person name="Mueller-Auer S."/>
            <person name="Gabel C."/>
            <person name="Fuchs M."/>
            <person name="Duesterhoeft A."/>
            <person name="Fritzc C."/>
            <person name="Holzer E."/>
            <person name="Moestl D."/>
            <person name="Hilbert H."/>
            <person name="Borzym K."/>
            <person name="Langer I."/>
            <person name="Beck A."/>
            <person name="Lehrach H."/>
            <person name="Reinhardt R."/>
            <person name="Pohl T.M."/>
            <person name="Eger P."/>
            <person name="Zimmermann W."/>
            <person name="Wedler H."/>
            <person name="Wambutt R."/>
            <person name="Purnelle B."/>
            <person name="Goffeau A."/>
            <person name="Cadieu E."/>
            <person name="Dreano S."/>
            <person name="Gloux S."/>
            <person name="Lelaure V."/>
            <person name="Mottier S."/>
            <person name="Galibert F."/>
            <person name="Aves S.J."/>
            <person name="Xiang Z."/>
            <person name="Hunt C."/>
            <person name="Moore K."/>
            <person name="Hurst S.M."/>
            <person name="Lucas M."/>
            <person name="Rochet M."/>
            <person name="Gaillardin C."/>
            <person name="Tallada V.A."/>
            <person name="Garzon A."/>
            <person name="Thode G."/>
            <person name="Daga R.R."/>
            <person name="Cruzado L."/>
            <person name="Jimenez J."/>
            <person name="Sanchez M."/>
            <person name="del Rey F."/>
            <person name="Benito J."/>
            <person name="Dominguez A."/>
            <person name="Revuelta J.L."/>
            <person name="Moreno S."/>
            <person name="Armstrong J."/>
            <person name="Forsburg S.L."/>
            <person name="Cerutti L."/>
            <person name="Lowe T."/>
            <person name="McCombie W.R."/>
            <person name="Paulsen I."/>
            <person name="Potashkin J."/>
            <person name="Shpakovski G.V."/>
            <person name="Ussery D."/>
            <person name="Barrell B.G."/>
            <person name="Nurse P."/>
        </authorList>
    </citation>
    <scope>NUCLEOTIDE SEQUENCE [LARGE SCALE GENOMIC DNA]</scope>
    <source>
        <strain>972 / ATCC 24843</strain>
    </source>
</reference>
<dbReference type="EMBL" id="CU329671">
    <property type="protein sequence ID" value="CAA21901.1"/>
    <property type="molecule type" value="Genomic_DNA"/>
</dbReference>
<dbReference type="PIR" id="T40741">
    <property type="entry name" value="T40741"/>
</dbReference>
<dbReference type="RefSeq" id="NP_596490.1">
    <property type="nucleotide sequence ID" value="NM_001022410.2"/>
</dbReference>
<dbReference type="SMR" id="O94299"/>
<dbReference type="BioGRID" id="277729">
    <property type="interactions" value="2"/>
</dbReference>
<dbReference type="STRING" id="284812.O94299"/>
<dbReference type="PaxDb" id="4896-SPBC887.16.1"/>
<dbReference type="EnsemblFungi" id="SPBC887.16.1">
    <property type="protein sequence ID" value="SPBC887.16.1:pep"/>
    <property type="gene ID" value="SPBC887.16"/>
</dbReference>
<dbReference type="KEGG" id="spo:2541215"/>
<dbReference type="PomBase" id="SPBC887.16"/>
<dbReference type="VEuPathDB" id="FungiDB:SPBC887.16"/>
<dbReference type="HOGENOM" id="CLU_2185477_0_0_1"/>
<dbReference type="InParanoid" id="O94299"/>
<dbReference type="PRO" id="PR:O94299"/>
<dbReference type="Proteomes" id="UP000002485">
    <property type="component" value="Chromosome II"/>
</dbReference>
<dbReference type="GO" id="GO:0016020">
    <property type="term" value="C:membrane"/>
    <property type="evidence" value="ECO:0007669"/>
    <property type="project" value="UniProtKB-SubCell"/>
</dbReference>
<evidence type="ECO:0000255" key="1"/>
<evidence type="ECO:0000305" key="2"/>
<organism>
    <name type="scientific">Schizosaccharomyces pombe (strain 972 / ATCC 24843)</name>
    <name type="common">Fission yeast</name>
    <dbReference type="NCBI Taxonomy" id="284812"/>
    <lineage>
        <taxon>Eukaryota</taxon>
        <taxon>Fungi</taxon>
        <taxon>Dikarya</taxon>
        <taxon>Ascomycota</taxon>
        <taxon>Taphrinomycotina</taxon>
        <taxon>Schizosaccharomycetes</taxon>
        <taxon>Schizosaccharomycetales</taxon>
        <taxon>Schizosaccharomycetaceae</taxon>
        <taxon>Schizosaccharomyces</taxon>
    </lineage>
</organism>
<sequence length="109" mass="13218">MARTNLQYPYKVLWCAQVKVVKTGLINFFAPSIQRQRERVCEGYLHETPLLLMQVVEREAITLAKTEFKNSFSNLHFFFLFWLLNFILFFRIHLYSCNFRMSIICEEYY</sequence>
<keyword id="KW-0472">Membrane</keyword>
<keyword id="KW-1185">Reference proteome</keyword>
<keyword id="KW-0812">Transmembrane</keyword>
<keyword id="KW-1133">Transmembrane helix</keyword>
<gene>
    <name type="ORF">SPBC887.16</name>
</gene>
<comment type="subcellular location">
    <subcellularLocation>
        <location evidence="2">Membrane</location>
        <topology evidence="2">Single-pass membrane protein</topology>
    </subcellularLocation>
</comment>